<name>GCH41_BURO0</name>
<gene>
    <name evidence="1" type="primary">folE2-1</name>
    <name type="ordered locus">Bcenmc03_3647</name>
</gene>
<proteinExistence type="inferred from homology"/>
<dbReference type="EC" id="3.5.4.16" evidence="1"/>
<dbReference type="EMBL" id="CP000959">
    <property type="protein sequence ID" value="ACA92799.1"/>
    <property type="molecule type" value="Genomic_DNA"/>
</dbReference>
<dbReference type="SMR" id="B1K3S8"/>
<dbReference type="GeneID" id="83050424"/>
<dbReference type="KEGG" id="bcm:Bcenmc03_3647"/>
<dbReference type="HOGENOM" id="CLU_062816_1_1_4"/>
<dbReference type="UniPathway" id="UPA00848">
    <property type="reaction ID" value="UER00151"/>
</dbReference>
<dbReference type="Proteomes" id="UP000002169">
    <property type="component" value="Chromosome 2"/>
</dbReference>
<dbReference type="GO" id="GO:0003934">
    <property type="term" value="F:GTP cyclohydrolase I activity"/>
    <property type="evidence" value="ECO:0007669"/>
    <property type="project" value="UniProtKB-UniRule"/>
</dbReference>
<dbReference type="GO" id="GO:0046654">
    <property type="term" value="P:tetrahydrofolate biosynthetic process"/>
    <property type="evidence" value="ECO:0007669"/>
    <property type="project" value="UniProtKB-UniRule"/>
</dbReference>
<dbReference type="Gene3D" id="3.10.270.10">
    <property type="entry name" value="Urate Oxidase"/>
    <property type="match status" value="1"/>
</dbReference>
<dbReference type="HAMAP" id="MF_01527_B">
    <property type="entry name" value="GTP_cyclohydrol_B"/>
    <property type="match status" value="1"/>
</dbReference>
<dbReference type="InterPro" id="IPR022838">
    <property type="entry name" value="GTP_cyclohydrolase_FolE2"/>
</dbReference>
<dbReference type="InterPro" id="IPR003801">
    <property type="entry name" value="GTP_cyclohydrolase_FolE2/MptA"/>
</dbReference>
<dbReference type="NCBIfam" id="NF010200">
    <property type="entry name" value="PRK13674.1-1"/>
    <property type="match status" value="1"/>
</dbReference>
<dbReference type="PANTHER" id="PTHR36445">
    <property type="entry name" value="GTP CYCLOHYDROLASE MPTA"/>
    <property type="match status" value="1"/>
</dbReference>
<dbReference type="PANTHER" id="PTHR36445:SF1">
    <property type="entry name" value="GTP CYCLOHYDROLASE MPTA"/>
    <property type="match status" value="1"/>
</dbReference>
<dbReference type="Pfam" id="PF02649">
    <property type="entry name" value="GCHY-1"/>
    <property type="match status" value="1"/>
</dbReference>
<keyword id="KW-0378">Hydrolase</keyword>
<reference key="1">
    <citation type="submission" date="2008-02" db="EMBL/GenBank/DDBJ databases">
        <title>Complete sequence of chromosome 2 of Burkholderia cenocepacia MC0-3.</title>
        <authorList>
            <person name="Copeland A."/>
            <person name="Lucas S."/>
            <person name="Lapidus A."/>
            <person name="Barry K."/>
            <person name="Bruce D."/>
            <person name="Goodwin L."/>
            <person name="Glavina del Rio T."/>
            <person name="Dalin E."/>
            <person name="Tice H."/>
            <person name="Pitluck S."/>
            <person name="Chain P."/>
            <person name="Malfatti S."/>
            <person name="Shin M."/>
            <person name="Vergez L."/>
            <person name="Schmutz J."/>
            <person name="Larimer F."/>
            <person name="Land M."/>
            <person name="Hauser L."/>
            <person name="Kyrpides N."/>
            <person name="Mikhailova N."/>
            <person name="Tiedje J."/>
            <person name="Richardson P."/>
        </authorList>
    </citation>
    <scope>NUCLEOTIDE SEQUENCE [LARGE SCALE GENOMIC DNA]</scope>
    <source>
        <strain>MC0-3</strain>
    </source>
</reference>
<feature type="chain" id="PRO_0000372022" description="GTP cyclohydrolase FolE2 1">
    <location>
        <begin position="1"/>
        <end position="269"/>
    </location>
</feature>
<feature type="site" description="May be catalytically important" evidence="1">
    <location>
        <position position="154"/>
    </location>
</feature>
<protein>
    <recommendedName>
        <fullName evidence="1">GTP cyclohydrolase FolE2 1</fullName>
        <ecNumber evidence="1">3.5.4.16</ecNumber>
    </recommendedName>
</protein>
<comment type="function">
    <text evidence="1">Converts GTP to 7,8-dihydroneopterin triphosphate.</text>
</comment>
<comment type="catalytic activity">
    <reaction evidence="1">
        <text>GTP + H2O = 7,8-dihydroneopterin 3'-triphosphate + formate + H(+)</text>
        <dbReference type="Rhea" id="RHEA:17473"/>
        <dbReference type="ChEBI" id="CHEBI:15377"/>
        <dbReference type="ChEBI" id="CHEBI:15378"/>
        <dbReference type="ChEBI" id="CHEBI:15740"/>
        <dbReference type="ChEBI" id="CHEBI:37565"/>
        <dbReference type="ChEBI" id="CHEBI:58462"/>
        <dbReference type="EC" id="3.5.4.16"/>
    </reaction>
</comment>
<comment type="pathway">
    <text evidence="1">Cofactor biosynthesis; 7,8-dihydroneopterin triphosphate biosynthesis; 7,8-dihydroneopterin triphosphate from GTP: step 1/1.</text>
</comment>
<comment type="similarity">
    <text evidence="1">Belongs to the GTP cyclohydrolase IV family.</text>
</comment>
<organism>
    <name type="scientific">Burkholderia orbicola (strain MC0-3)</name>
    <dbReference type="NCBI Taxonomy" id="406425"/>
    <lineage>
        <taxon>Bacteria</taxon>
        <taxon>Pseudomonadati</taxon>
        <taxon>Pseudomonadota</taxon>
        <taxon>Betaproteobacteria</taxon>
        <taxon>Burkholderiales</taxon>
        <taxon>Burkholderiaceae</taxon>
        <taxon>Burkholderia</taxon>
        <taxon>Burkholderia cepacia complex</taxon>
        <taxon>Burkholderia orbicola</taxon>
    </lineage>
</organism>
<evidence type="ECO:0000255" key="1">
    <source>
        <dbReference type="HAMAP-Rule" id="MF_01527"/>
    </source>
</evidence>
<sequence length="269" mass="30143">MNQMNPAFVMPDVQSTVDTRQIPIQRVGVKAVRHPLTVCTESGDVQPTVGVWNLDVRLPADQKGTHMSRFVALLEENRAPLTVERFRAMLASMLVKLEAEAGRIEVTFPYFVNKTAPVSGVQSLLDYEVTLAGESRNGDTRLFLKVLVPVTSLCPCSKKISQYGAHNQRSHVTIDAELAADLPVEALIRIAEEEASCELWGLLKRPDEKFVTERAYENPKFVEDLVRDVAQRLDADERVVAYVLEAENFESIHNHSAYALIERDKRQAA</sequence>
<accession>B1K3S8</accession>